<gene>
    <name evidence="1" type="primary">msrA</name>
    <name type="ordered locus">BRA1069</name>
    <name type="ordered locus">BS1330_II1061</name>
</gene>
<protein>
    <recommendedName>
        <fullName evidence="1">Peptide methionine sulfoxide reductase MsrA</fullName>
        <shortName evidence="1">Protein-methionine-S-oxide reductase</shortName>
        <ecNumber evidence="1">1.8.4.11</ecNumber>
    </recommendedName>
    <alternativeName>
        <fullName evidence="1">Peptide-methionine (S)-S-oxide reductase</fullName>
        <shortName evidence="1">Peptide Met(O) reductase</shortName>
    </alternativeName>
</protein>
<reference key="1">
    <citation type="journal article" date="2002" name="Proc. Natl. Acad. Sci. U.S.A.">
        <title>The Brucella suis genome reveals fundamental similarities between animal and plant pathogens and symbionts.</title>
        <authorList>
            <person name="Paulsen I.T."/>
            <person name="Seshadri R."/>
            <person name="Nelson K.E."/>
            <person name="Eisen J.A."/>
            <person name="Heidelberg J.F."/>
            <person name="Read T.D."/>
            <person name="Dodson R.J."/>
            <person name="Umayam L.A."/>
            <person name="Brinkac L.M."/>
            <person name="Beanan M.J."/>
            <person name="Daugherty S.C."/>
            <person name="DeBoy R.T."/>
            <person name="Durkin A.S."/>
            <person name="Kolonay J.F."/>
            <person name="Madupu R."/>
            <person name="Nelson W.C."/>
            <person name="Ayodeji B."/>
            <person name="Kraul M."/>
            <person name="Shetty J."/>
            <person name="Malek J.A."/>
            <person name="Van Aken S.E."/>
            <person name="Riedmuller S."/>
            <person name="Tettelin H."/>
            <person name="Gill S.R."/>
            <person name="White O."/>
            <person name="Salzberg S.L."/>
            <person name="Hoover D.L."/>
            <person name="Lindler L.E."/>
            <person name="Halling S.M."/>
            <person name="Boyle S.M."/>
            <person name="Fraser C.M."/>
        </authorList>
    </citation>
    <scope>NUCLEOTIDE SEQUENCE [LARGE SCALE GENOMIC DNA]</scope>
    <source>
        <strain>1330</strain>
    </source>
</reference>
<reference key="2">
    <citation type="journal article" date="2011" name="J. Bacteriol.">
        <title>Revised genome sequence of Brucella suis 1330.</title>
        <authorList>
            <person name="Tae H."/>
            <person name="Shallom S."/>
            <person name="Settlage R."/>
            <person name="Preston D."/>
            <person name="Adams L.G."/>
            <person name="Garner H.R."/>
        </authorList>
    </citation>
    <scope>NUCLEOTIDE SEQUENCE [LARGE SCALE GENOMIC DNA]</scope>
    <source>
        <strain>1330</strain>
    </source>
</reference>
<comment type="function">
    <text evidence="1">Has an important function as a repair enzyme for proteins that have been inactivated by oxidation. Catalyzes the reversible oxidation-reduction of methionine sulfoxide in proteins to methionine.</text>
</comment>
<comment type="catalytic activity">
    <reaction evidence="1">
        <text>L-methionyl-[protein] + [thioredoxin]-disulfide + H2O = L-methionyl-(S)-S-oxide-[protein] + [thioredoxin]-dithiol</text>
        <dbReference type="Rhea" id="RHEA:14217"/>
        <dbReference type="Rhea" id="RHEA-COMP:10698"/>
        <dbReference type="Rhea" id="RHEA-COMP:10700"/>
        <dbReference type="Rhea" id="RHEA-COMP:12313"/>
        <dbReference type="Rhea" id="RHEA-COMP:12315"/>
        <dbReference type="ChEBI" id="CHEBI:15377"/>
        <dbReference type="ChEBI" id="CHEBI:16044"/>
        <dbReference type="ChEBI" id="CHEBI:29950"/>
        <dbReference type="ChEBI" id="CHEBI:44120"/>
        <dbReference type="ChEBI" id="CHEBI:50058"/>
        <dbReference type="EC" id="1.8.4.11"/>
    </reaction>
</comment>
<comment type="catalytic activity">
    <reaction evidence="1">
        <text>[thioredoxin]-disulfide + L-methionine + H2O = L-methionine (S)-S-oxide + [thioredoxin]-dithiol</text>
        <dbReference type="Rhea" id="RHEA:19993"/>
        <dbReference type="Rhea" id="RHEA-COMP:10698"/>
        <dbReference type="Rhea" id="RHEA-COMP:10700"/>
        <dbReference type="ChEBI" id="CHEBI:15377"/>
        <dbReference type="ChEBI" id="CHEBI:29950"/>
        <dbReference type="ChEBI" id="CHEBI:50058"/>
        <dbReference type="ChEBI" id="CHEBI:57844"/>
        <dbReference type="ChEBI" id="CHEBI:58772"/>
        <dbReference type="EC" id="1.8.4.11"/>
    </reaction>
</comment>
<comment type="similarity">
    <text evidence="1">Belongs to the MsrA Met sulfoxide reductase family.</text>
</comment>
<evidence type="ECO:0000255" key="1">
    <source>
        <dbReference type="HAMAP-Rule" id="MF_01401"/>
    </source>
</evidence>
<accession>Q8FUZ0</accession>
<accession>G0KE75</accession>
<name>MSRA_BRUSU</name>
<proteinExistence type="inferred from homology"/>
<dbReference type="EC" id="1.8.4.11" evidence="1"/>
<dbReference type="EMBL" id="AE014292">
    <property type="protein sequence ID" value="AAN34236.1"/>
    <property type="molecule type" value="Genomic_DNA"/>
</dbReference>
<dbReference type="EMBL" id="CP002998">
    <property type="protein sequence ID" value="AEM20513.1"/>
    <property type="molecule type" value="Genomic_DNA"/>
</dbReference>
<dbReference type="RefSeq" id="WP_006192275.1">
    <property type="nucleotide sequence ID" value="NZ_KN046805.1"/>
</dbReference>
<dbReference type="SMR" id="Q8FUZ0"/>
<dbReference type="GeneID" id="45054053"/>
<dbReference type="KEGG" id="bms:BRA1069"/>
<dbReference type="KEGG" id="bsi:BS1330_II1061"/>
<dbReference type="PATRIC" id="fig|204722.22.peg.2660"/>
<dbReference type="HOGENOM" id="CLU_031040_10_3_5"/>
<dbReference type="PhylomeDB" id="Q8FUZ0"/>
<dbReference type="Proteomes" id="UP000007104">
    <property type="component" value="Chromosome II"/>
</dbReference>
<dbReference type="GO" id="GO:0005737">
    <property type="term" value="C:cytoplasm"/>
    <property type="evidence" value="ECO:0007669"/>
    <property type="project" value="TreeGrafter"/>
</dbReference>
<dbReference type="GO" id="GO:0036456">
    <property type="term" value="F:L-methionine-(S)-S-oxide reductase activity"/>
    <property type="evidence" value="ECO:0007669"/>
    <property type="project" value="TreeGrafter"/>
</dbReference>
<dbReference type="GO" id="GO:0008113">
    <property type="term" value="F:peptide-methionine (S)-S-oxide reductase activity"/>
    <property type="evidence" value="ECO:0007669"/>
    <property type="project" value="UniProtKB-UniRule"/>
</dbReference>
<dbReference type="GO" id="GO:0034599">
    <property type="term" value="P:cellular response to oxidative stress"/>
    <property type="evidence" value="ECO:0007669"/>
    <property type="project" value="TreeGrafter"/>
</dbReference>
<dbReference type="GO" id="GO:0036211">
    <property type="term" value="P:protein modification process"/>
    <property type="evidence" value="ECO:0007669"/>
    <property type="project" value="UniProtKB-UniRule"/>
</dbReference>
<dbReference type="FunFam" id="3.30.1060.10:FF:000001">
    <property type="entry name" value="Peptide methionine sulfoxide reductase MsrA"/>
    <property type="match status" value="1"/>
</dbReference>
<dbReference type="Gene3D" id="3.30.1060.10">
    <property type="entry name" value="Peptide methionine sulphoxide reductase MsrA"/>
    <property type="match status" value="1"/>
</dbReference>
<dbReference type="HAMAP" id="MF_01401">
    <property type="entry name" value="MsrA"/>
    <property type="match status" value="1"/>
</dbReference>
<dbReference type="InterPro" id="IPR002569">
    <property type="entry name" value="Met_Sox_Rdtase_MsrA_dom"/>
</dbReference>
<dbReference type="InterPro" id="IPR036509">
    <property type="entry name" value="Met_Sox_Rdtase_MsrA_sf"/>
</dbReference>
<dbReference type="InterPro" id="IPR050162">
    <property type="entry name" value="MsrA_MetSO_reductase"/>
</dbReference>
<dbReference type="NCBIfam" id="TIGR00401">
    <property type="entry name" value="msrA"/>
    <property type="match status" value="1"/>
</dbReference>
<dbReference type="PANTHER" id="PTHR42799">
    <property type="entry name" value="MITOCHONDRIAL PEPTIDE METHIONINE SULFOXIDE REDUCTASE"/>
    <property type="match status" value="1"/>
</dbReference>
<dbReference type="PANTHER" id="PTHR42799:SF2">
    <property type="entry name" value="MITOCHONDRIAL PEPTIDE METHIONINE SULFOXIDE REDUCTASE"/>
    <property type="match status" value="1"/>
</dbReference>
<dbReference type="Pfam" id="PF01625">
    <property type="entry name" value="PMSR"/>
    <property type="match status" value="1"/>
</dbReference>
<dbReference type="SUPFAM" id="SSF55068">
    <property type="entry name" value="Peptide methionine sulfoxide reductase"/>
    <property type="match status" value="1"/>
</dbReference>
<sequence length="218" mass="24075">MSFFDSYRKKMQMPSKEEVLPGRVQPIPTAAAHFVSGHPLKGPWPDGMKQVLFGMGCFWGAERLFWQVPGVYVTAVGYAGGITPNPTYEETCTGLTGHAEVVLVVYDPKVVTLNELLALFWEEHDPTQGMRQGNDIGTTYRSVIYTFNAVDRAVAEKSRDAYSQALASRGLGPVTTQIADAPDFYYAEDYHQQYLAKNPDGYCGLRGTDVSCPIPLAH</sequence>
<feature type="chain" id="PRO_0000138533" description="Peptide methionine sulfoxide reductase MsrA">
    <location>
        <begin position="1"/>
        <end position="218"/>
    </location>
</feature>
<feature type="active site" evidence="1">
    <location>
        <position position="57"/>
    </location>
</feature>
<organism>
    <name type="scientific">Brucella suis biovar 1 (strain 1330)</name>
    <dbReference type="NCBI Taxonomy" id="204722"/>
    <lineage>
        <taxon>Bacteria</taxon>
        <taxon>Pseudomonadati</taxon>
        <taxon>Pseudomonadota</taxon>
        <taxon>Alphaproteobacteria</taxon>
        <taxon>Hyphomicrobiales</taxon>
        <taxon>Brucellaceae</taxon>
        <taxon>Brucella/Ochrobactrum group</taxon>
        <taxon>Brucella</taxon>
    </lineage>
</organism>
<keyword id="KW-0560">Oxidoreductase</keyword>